<sequence>MIKKIGVLTSGGDAPGMNAAIRGVVRSALTEGLEVMGIYDGYLGLYEDRMVQLDRYSVSDMINRGGTFLGSARFPEFRDENIRAVAIENLKKRGIDALVVIGGDGSYMGAMRLTEMGFPCIGLPGTIDNDIKGTDYTIGFFTALSTVVEAIDRLRDTSSSHQRISVVEVMGRYCGDLTLAAAIAGGCEFVVVPEVEFSREDLVNEIKAGIAKGKKHAIVAITEHMCDVDELAHFIEKETGRETRATVLGHIQRGGSPVPYDRILASRMGAYAIDLLLAGYGGRCVGIQNEQLVHHDIIDAIENMKRPFKGDWLDCAKKLY</sequence>
<accession>Q32A80</accession>
<proteinExistence type="inferred from homology"/>
<feature type="chain" id="PRO_1000059789" description="ATP-dependent 6-phosphofructokinase isozyme 1">
    <location>
        <begin position="1"/>
        <end position="320"/>
    </location>
</feature>
<feature type="active site" description="Proton acceptor" evidence="1">
    <location>
        <position position="128"/>
    </location>
</feature>
<feature type="binding site" evidence="1">
    <location>
        <position position="12"/>
    </location>
    <ligand>
        <name>ATP</name>
        <dbReference type="ChEBI" id="CHEBI:30616"/>
    </ligand>
</feature>
<feature type="binding site" evidence="1">
    <location>
        <begin position="22"/>
        <end position="26"/>
    </location>
    <ligand>
        <name>ADP</name>
        <dbReference type="ChEBI" id="CHEBI:456216"/>
        <note>allosteric activator; ligand shared between dimeric partners</note>
    </ligand>
</feature>
<feature type="binding site" evidence="1">
    <location>
        <begin position="55"/>
        <end position="60"/>
    </location>
    <ligand>
        <name>ADP</name>
        <dbReference type="ChEBI" id="CHEBI:456216"/>
        <note>allosteric activator; ligand shared between dimeric partners</note>
    </ligand>
</feature>
<feature type="binding site" evidence="1">
    <location>
        <begin position="73"/>
        <end position="74"/>
    </location>
    <ligand>
        <name>ATP</name>
        <dbReference type="ChEBI" id="CHEBI:30616"/>
    </ligand>
</feature>
<feature type="binding site" evidence="1">
    <location>
        <begin position="103"/>
        <end position="106"/>
    </location>
    <ligand>
        <name>ATP</name>
        <dbReference type="ChEBI" id="CHEBI:30616"/>
    </ligand>
</feature>
<feature type="binding site" evidence="1">
    <location>
        <position position="104"/>
    </location>
    <ligand>
        <name>Mg(2+)</name>
        <dbReference type="ChEBI" id="CHEBI:18420"/>
        <note>catalytic</note>
    </ligand>
</feature>
<feature type="binding site" description="in other chain" evidence="1">
    <location>
        <begin position="126"/>
        <end position="128"/>
    </location>
    <ligand>
        <name>substrate</name>
        <note>ligand shared between dimeric partners</note>
    </ligand>
</feature>
<feature type="binding site" description="in other chain" evidence="1">
    <location>
        <position position="155"/>
    </location>
    <ligand>
        <name>ADP</name>
        <dbReference type="ChEBI" id="CHEBI:456216"/>
        <note>allosteric activator; ligand shared between dimeric partners</note>
    </ligand>
</feature>
<feature type="binding site" evidence="1">
    <location>
        <position position="163"/>
    </location>
    <ligand>
        <name>substrate</name>
        <note>ligand shared between dimeric partners</note>
    </ligand>
</feature>
<feature type="binding site" description="in other chain" evidence="1">
    <location>
        <begin position="170"/>
        <end position="172"/>
    </location>
    <ligand>
        <name>substrate</name>
        <note>ligand shared between dimeric partners</note>
    </ligand>
</feature>
<feature type="binding site" description="in other chain" evidence="1">
    <location>
        <begin position="186"/>
        <end position="188"/>
    </location>
    <ligand>
        <name>ADP</name>
        <dbReference type="ChEBI" id="CHEBI:456216"/>
        <note>allosteric activator; ligand shared between dimeric partners</note>
    </ligand>
</feature>
<feature type="binding site" description="in other chain" evidence="1">
    <location>
        <position position="212"/>
    </location>
    <ligand>
        <name>ADP</name>
        <dbReference type="ChEBI" id="CHEBI:456216"/>
        <note>allosteric activator; ligand shared between dimeric partners</note>
    </ligand>
</feature>
<feature type="binding site" description="in other chain" evidence="1">
    <location>
        <begin position="214"/>
        <end position="216"/>
    </location>
    <ligand>
        <name>ADP</name>
        <dbReference type="ChEBI" id="CHEBI:456216"/>
        <note>allosteric activator; ligand shared between dimeric partners</note>
    </ligand>
</feature>
<feature type="binding site" description="in other chain" evidence="1">
    <location>
        <position position="223"/>
    </location>
    <ligand>
        <name>substrate</name>
        <note>ligand shared between dimeric partners</note>
    </ligand>
</feature>
<feature type="binding site" evidence="1">
    <location>
        <position position="244"/>
    </location>
    <ligand>
        <name>substrate</name>
        <note>ligand shared between dimeric partners</note>
    </ligand>
</feature>
<feature type="binding site" description="in other chain" evidence="1">
    <location>
        <begin position="250"/>
        <end position="253"/>
    </location>
    <ligand>
        <name>substrate</name>
        <note>ligand shared between dimeric partners</note>
    </ligand>
</feature>
<gene>
    <name evidence="1" type="primary">pfkA</name>
    <name type="ordered locus">SDY_3831</name>
</gene>
<protein>
    <recommendedName>
        <fullName evidence="1">ATP-dependent 6-phosphofructokinase isozyme 1</fullName>
        <shortName evidence="1">ATP-PFK 1</shortName>
        <shortName evidence="1">Phosphofructokinase 1</shortName>
        <ecNumber evidence="1">2.7.1.11</ecNumber>
    </recommendedName>
    <alternativeName>
        <fullName>6-phosphofructokinase isozyme I</fullName>
    </alternativeName>
    <alternativeName>
        <fullName evidence="1">Phosphohexokinase 1</fullName>
    </alternativeName>
</protein>
<reference key="1">
    <citation type="journal article" date="2005" name="Nucleic Acids Res.">
        <title>Genome dynamics and diversity of Shigella species, the etiologic agents of bacillary dysentery.</title>
        <authorList>
            <person name="Yang F."/>
            <person name="Yang J."/>
            <person name="Zhang X."/>
            <person name="Chen L."/>
            <person name="Jiang Y."/>
            <person name="Yan Y."/>
            <person name="Tang X."/>
            <person name="Wang J."/>
            <person name="Xiong Z."/>
            <person name="Dong J."/>
            <person name="Xue Y."/>
            <person name="Zhu Y."/>
            <person name="Xu X."/>
            <person name="Sun L."/>
            <person name="Chen S."/>
            <person name="Nie H."/>
            <person name="Peng J."/>
            <person name="Xu J."/>
            <person name="Wang Y."/>
            <person name="Yuan Z."/>
            <person name="Wen Y."/>
            <person name="Yao Z."/>
            <person name="Shen Y."/>
            <person name="Qiang B."/>
            <person name="Hou Y."/>
            <person name="Yu J."/>
            <person name="Jin Q."/>
        </authorList>
    </citation>
    <scope>NUCLEOTIDE SEQUENCE [LARGE SCALE GENOMIC DNA]</scope>
    <source>
        <strain>Sd197</strain>
    </source>
</reference>
<dbReference type="EC" id="2.7.1.11" evidence="1"/>
<dbReference type="EMBL" id="CP000034">
    <property type="protein sequence ID" value="ABB63775.1"/>
    <property type="molecule type" value="Genomic_DNA"/>
</dbReference>
<dbReference type="RefSeq" id="WP_000591795.1">
    <property type="nucleotide sequence ID" value="NC_007606.1"/>
</dbReference>
<dbReference type="RefSeq" id="YP_405266.1">
    <property type="nucleotide sequence ID" value="NC_007606.1"/>
</dbReference>
<dbReference type="SMR" id="Q32A80"/>
<dbReference type="STRING" id="300267.SDY_3831"/>
<dbReference type="EnsemblBacteria" id="ABB63775">
    <property type="protein sequence ID" value="ABB63775"/>
    <property type="gene ID" value="SDY_3831"/>
</dbReference>
<dbReference type="GeneID" id="93777982"/>
<dbReference type="KEGG" id="sdy:SDY_3831"/>
<dbReference type="PATRIC" id="fig|300267.13.peg.4525"/>
<dbReference type="HOGENOM" id="CLU_020655_0_1_6"/>
<dbReference type="UniPathway" id="UPA00109">
    <property type="reaction ID" value="UER00182"/>
</dbReference>
<dbReference type="Proteomes" id="UP000002716">
    <property type="component" value="Chromosome"/>
</dbReference>
<dbReference type="GO" id="GO:0005945">
    <property type="term" value="C:6-phosphofructokinase complex"/>
    <property type="evidence" value="ECO:0007669"/>
    <property type="project" value="TreeGrafter"/>
</dbReference>
<dbReference type="GO" id="GO:0003872">
    <property type="term" value="F:6-phosphofructokinase activity"/>
    <property type="evidence" value="ECO:0007669"/>
    <property type="project" value="UniProtKB-UniRule"/>
</dbReference>
<dbReference type="GO" id="GO:0016208">
    <property type="term" value="F:AMP binding"/>
    <property type="evidence" value="ECO:0007669"/>
    <property type="project" value="TreeGrafter"/>
</dbReference>
<dbReference type="GO" id="GO:0005524">
    <property type="term" value="F:ATP binding"/>
    <property type="evidence" value="ECO:0007669"/>
    <property type="project" value="UniProtKB-KW"/>
</dbReference>
<dbReference type="GO" id="GO:0070095">
    <property type="term" value="F:fructose-6-phosphate binding"/>
    <property type="evidence" value="ECO:0007669"/>
    <property type="project" value="TreeGrafter"/>
</dbReference>
<dbReference type="GO" id="GO:0042802">
    <property type="term" value="F:identical protein binding"/>
    <property type="evidence" value="ECO:0007669"/>
    <property type="project" value="TreeGrafter"/>
</dbReference>
<dbReference type="GO" id="GO:0046872">
    <property type="term" value="F:metal ion binding"/>
    <property type="evidence" value="ECO:0007669"/>
    <property type="project" value="UniProtKB-KW"/>
</dbReference>
<dbReference type="GO" id="GO:0048029">
    <property type="term" value="F:monosaccharide binding"/>
    <property type="evidence" value="ECO:0007669"/>
    <property type="project" value="TreeGrafter"/>
</dbReference>
<dbReference type="GO" id="GO:0061621">
    <property type="term" value="P:canonical glycolysis"/>
    <property type="evidence" value="ECO:0007669"/>
    <property type="project" value="TreeGrafter"/>
</dbReference>
<dbReference type="GO" id="GO:0030388">
    <property type="term" value="P:fructose 1,6-bisphosphate metabolic process"/>
    <property type="evidence" value="ECO:0007669"/>
    <property type="project" value="TreeGrafter"/>
</dbReference>
<dbReference type="GO" id="GO:0006002">
    <property type="term" value="P:fructose 6-phosphate metabolic process"/>
    <property type="evidence" value="ECO:0007669"/>
    <property type="project" value="InterPro"/>
</dbReference>
<dbReference type="CDD" id="cd00763">
    <property type="entry name" value="Bacterial_PFK"/>
    <property type="match status" value="1"/>
</dbReference>
<dbReference type="FunFam" id="3.40.50.450:FF:000001">
    <property type="entry name" value="ATP-dependent 6-phosphofructokinase"/>
    <property type="match status" value="1"/>
</dbReference>
<dbReference type="FunFam" id="3.40.50.460:FF:000002">
    <property type="entry name" value="ATP-dependent 6-phosphofructokinase"/>
    <property type="match status" value="1"/>
</dbReference>
<dbReference type="Gene3D" id="3.40.50.450">
    <property type="match status" value="1"/>
</dbReference>
<dbReference type="Gene3D" id="3.40.50.460">
    <property type="entry name" value="Phosphofructokinase domain"/>
    <property type="match status" value="1"/>
</dbReference>
<dbReference type="HAMAP" id="MF_00339">
    <property type="entry name" value="Phosphofructokinase_I_B1"/>
    <property type="match status" value="1"/>
</dbReference>
<dbReference type="InterPro" id="IPR022953">
    <property type="entry name" value="ATP_PFK"/>
</dbReference>
<dbReference type="InterPro" id="IPR012003">
    <property type="entry name" value="ATP_PFK_prok-type"/>
</dbReference>
<dbReference type="InterPro" id="IPR012828">
    <property type="entry name" value="PFKA_ATP_prok"/>
</dbReference>
<dbReference type="InterPro" id="IPR015912">
    <property type="entry name" value="Phosphofructokinase_CS"/>
</dbReference>
<dbReference type="InterPro" id="IPR000023">
    <property type="entry name" value="Phosphofructokinase_dom"/>
</dbReference>
<dbReference type="InterPro" id="IPR035966">
    <property type="entry name" value="PKF_sf"/>
</dbReference>
<dbReference type="NCBIfam" id="TIGR02482">
    <property type="entry name" value="PFKA_ATP"/>
    <property type="match status" value="1"/>
</dbReference>
<dbReference type="NCBIfam" id="NF002872">
    <property type="entry name" value="PRK03202.1"/>
    <property type="match status" value="1"/>
</dbReference>
<dbReference type="PANTHER" id="PTHR13697:SF4">
    <property type="entry name" value="ATP-DEPENDENT 6-PHOSPHOFRUCTOKINASE"/>
    <property type="match status" value="1"/>
</dbReference>
<dbReference type="PANTHER" id="PTHR13697">
    <property type="entry name" value="PHOSPHOFRUCTOKINASE"/>
    <property type="match status" value="1"/>
</dbReference>
<dbReference type="Pfam" id="PF00365">
    <property type="entry name" value="PFK"/>
    <property type="match status" value="1"/>
</dbReference>
<dbReference type="PIRSF" id="PIRSF000532">
    <property type="entry name" value="ATP_PFK_prok"/>
    <property type="match status" value="1"/>
</dbReference>
<dbReference type="PRINTS" id="PR00476">
    <property type="entry name" value="PHFRCTKINASE"/>
</dbReference>
<dbReference type="SUPFAM" id="SSF53784">
    <property type="entry name" value="Phosphofructokinase"/>
    <property type="match status" value="1"/>
</dbReference>
<dbReference type="PROSITE" id="PS00433">
    <property type="entry name" value="PHOSPHOFRUCTOKINASE"/>
    <property type="match status" value="1"/>
</dbReference>
<comment type="function">
    <text evidence="1">Catalyzes the phosphorylation of D-fructose 6-phosphate to fructose 1,6-bisphosphate by ATP, the first committing step of glycolysis.</text>
</comment>
<comment type="catalytic activity">
    <reaction evidence="1">
        <text>beta-D-fructose 6-phosphate + ATP = beta-D-fructose 1,6-bisphosphate + ADP + H(+)</text>
        <dbReference type="Rhea" id="RHEA:16109"/>
        <dbReference type="ChEBI" id="CHEBI:15378"/>
        <dbReference type="ChEBI" id="CHEBI:30616"/>
        <dbReference type="ChEBI" id="CHEBI:32966"/>
        <dbReference type="ChEBI" id="CHEBI:57634"/>
        <dbReference type="ChEBI" id="CHEBI:456216"/>
        <dbReference type="EC" id="2.7.1.11"/>
    </reaction>
</comment>
<comment type="cofactor">
    <cofactor evidence="1">
        <name>Mg(2+)</name>
        <dbReference type="ChEBI" id="CHEBI:18420"/>
    </cofactor>
</comment>
<comment type="activity regulation">
    <text evidence="1">Allosterically activated by ADP and other diphosphonucleosides, and allosterically inhibited by phosphoenolpyruvate.</text>
</comment>
<comment type="pathway">
    <text evidence="1">Carbohydrate degradation; glycolysis; D-glyceraldehyde 3-phosphate and glycerone phosphate from D-glucose: step 3/4.</text>
</comment>
<comment type="subunit">
    <text evidence="1">Homotetramer.</text>
</comment>
<comment type="subcellular location">
    <subcellularLocation>
        <location evidence="1">Cytoplasm</location>
    </subcellularLocation>
</comment>
<comment type="similarity">
    <text evidence="1">Belongs to the phosphofructokinase type A (PFKA) family. ATP-dependent PFK group I subfamily. Prokaryotic clade 'B1' sub-subfamily.</text>
</comment>
<keyword id="KW-0021">Allosteric enzyme</keyword>
<keyword id="KW-0067">ATP-binding</keyword>
<keyword id="KW-0963">Cytoplasm</keyword>
<keyword id="KW-0324">Glycolysis</keyword>
<keyword id="KW-0418">Kinase</keyword>
<keyword id="KW-0460">Magnesium</keyword>
<keyword id="KW-0479">Metal-binding</keyword>
<keyword id="KW-0547">Nucleotide-binding</keyword>
<keyword id="KW-1185">Reference proteome</keyword>
<keyword id="KW-0808">Transferase</keyword>
<evidence type="ECO:0000255" key="1">
    <source>
        <dbReference type="HAMAP-Rule" id="MF_00339"/>
    </source>
</evidence>
<organism>
    <name type="scientific">Shigella dysenteriae serotype 1 (strain Sd197)</name>
    <dbReference type="NCBI Taxonomy" id="300267"/>
    <lineage>
        <taxon>Bacteria</taxon>
        <taxon>Pseudomonadati</taxon>
        <taxon>Pseudomonadota</taxon>
        <taxon>Gammaproteobacteria</taxon>
        <taxon>Enterobacterales</taxon>
        <taxon>Enterobacteriaceae</taxon>
        <taxon>Shigella</taxon>
    </lineage>
</organism>
<name>PFKA_SHIDS</name>